<organism>
    <name type="scientific">Salmonella schwarzengrund (strain CVM19633)</name>
    <dbReference type="NCBI Taxonomy" id="439843"/>
    <lineage>
        <taxon>Bacteria</taxon>
        <taxon>Pseudomonadati</taxon>
        <taxon>Pseudomonadota</taxon>
        <taxon>Gammaproteobacteria</taxon>
        <taxon>Enterobacterales</taxon>
        <taxon>Enterobacteriaceae</taxon>
        <taxon>Salmonella</taxon>
    </lineage>
</organism>
<protein>
    <recommendedName>
        <fullName evidence="1">Beta-hexosaminidase</fullName>
        <ecNumber evidence="1">3.2.1.52</ecNumber>
    </recommendedName>
    <alternativeName>
        <fullName evidence="1">Beta-N-acetylhexosaminidase</fullName>
    </alternativeName>
    <alternativeName>
        <fullName evidence="1">N-acetyl-beta-glucosaminidase</fullName>
    </alternativeName>
</protein>
<gene>
    <name evidence="1" type="primary">nagZ</name>
    <name type="ordered locus">SeSA_A1285</name>
</gene>
<sequence>MGPVMLNVEGCELDAEEREILAHPLVGGLILFTRNYHDPEQLRELVRQIRAASRNHLVVAVDQEGGRVQRFREGFTRLPAAQSFFALHGLEEGGRLAQEAGWLMASEMIAMDIDISFAPVLDVGHISAAIGERSYHADPAKALAMATRFIDGMHDAGMKTTGKHFPGHGAVTADSHKETPCDPRPETDIRGKDMSVFRTLISENKLDAIMPAHVIYRAIDPRPASGSPYWLKTVLRQELGFDGVIFSDDLSMEGAAIMGSYAERAQASLDAGCDMILVCNNRKGAVSVLDNLSPIKAERVTRLYHKGSFSRRELMDSARWKTASAQLNQLHERWQEEKAGH</sequence>
<comment type="function">
    <text evidence="1">Plays a role in peptidoglycan recycling by cleaving the terminal beta-1,4-linked N-acetylglucosamine (GlcNAc) from peptide-linked peptidoglycan fragments, giving rise to free GlcNAc, anhydro-N-acetylmuramic acid and anhydro-N-acetylmuramic acid-linked peptides.</text>
</comment>
<comment type="catalytic activity">
    <reaction evidence="1">
        <text>Hydrolysis of terminal non-reducing N-acetyl-D-hexosamine residues in N-acetyl-beta-D-hexosaminides.</text>
        <dbReference type="EC" id="3.2.1.52"/>
    </reaction>
</comment>
<comment type="pathway">
    <text evidence="1">Cell wall biogenesis; peptidoglycan recycling.</text>
</comment>
<comment type="subcellular location">
    <subcellularLocation>
        <location evidence="1">Cytoplasm</location>
    </subcellularLocation>
</comment>
<comment type="similarity">
    <text evidence="1">Belongs to the glycosyl hydrolase 3 family. NagZ subfamily.</text>
</comment>
<reference key="1">
    <citation type="journal article" date="2011" name="J. Bacteriol.">
        <title>Comparative genomics of 28 Salmonella enterica isolates: evidence for CRISPR-mediated adaptive sublineage evolution.</title>
        <authorList>
            <person name="Fricke W.F."/>
            <person name="Mammel M.K."/>
            <person name="McDermott P.F."/>
            <person name="Tartera C."/>
            <person name="White D.G."/>
            <person name="Leclerc J.E."/>
            <person name="Ravel J."/>
            <person name="Cebula T.A."/>
        </authorList>
    </citation>
    <scope>NUCLEOTIDE SEQUENCE [LARGE SCALE GENOMIC DNA]</scope>
    <source>
        <strain>CVM19633</strain>
    </source>
</reference>
<evidence type="ECO:0000255" key="1">
    <source>
        <dbReference type="HAMAP-Rule" id="MF_00364"/>
    </source>
</evidence>
<evidence type="ECO:0000256" key="2">
    <source>
        <dbReference type="SAM" id="MobiDB-lite"/>
    </source>
</evidence>
<name>NAGZ_SALSV</name>
<proteinExistence type="inferred from homology"/>
<dbReference type="EC" id="3.2.1.52" evidence="1"/>
<dbReference type="EMBL" id="CP001127">
    <property type="protein sequence ID" value="ACF89673.1"/>
    <property type="molecule type" value="Genomic_DNA"/>
</dbReference>
<dbReference type="RefSeq" id="WP_000529340.1">
    <property type="nucleotide sequence ID" value="NC_011094.1"/>
</dbReference>
<dbReference type="SMR" id="B4TTH9"/>
<dbReference type="CAZy" id="GH3">
    <property type="family name" value="Glycoside Hydrolase Family 3"/>
</dbReference>
<dbReference type="KEGG" id="sew:SeSA_A1285"/>
<dbReference type="HOGENOM" id="CLU_008392_0_0_6"/>
<dbReference type="UniPathway" id="UPA00544"/>
<dbReference type="Proteomes" id="UP000001865">
    <property type="component" value="Chromosome"/>
</dbReference>
<dbReference type="GO" id="GO:0005737">
    <property type="term" value="C:cytoplasm"/>
    <property type="evidence" value="ECO:0007669"/>
    <property type="project" value="UniProtKB-SubCell"/>
</dbReference>
<dbReference type="GO" id="GO:0004563">
    <property type="term" value="F:beta-N-acetylhexosaminidase activity"/>
    <property type="evidence" value="ECO:0007669"/>
    <property type="project" value="UniProtKB-UniRule"/>
</dbReference>
<dbReference type="GO" id="GO:0005975">
    <property type="term" value="P:carbohydrate metabolic process"/>
    <property type="evidence" value="ECO:0007669"/>
    <property type="project" value="InterPro"/>
</dbReference>
<dbReference type="GO" id="GO:0051301">
    <property type="term" value="P:cell division"/>
    <property type="evidence" value="ECO:0007669"/>
    <property type="project" value="UniProtKB-KW"/>
</dbReference>
<dbReference type="GO" id="GO:0071555">
    <property type="term" value="P:cell wall organization"/>
    <property type="evidence" value="ECO:0007669"/>
    <property type="project" value="UniProtKB-KW"/>
</dbReference>
<dbReference type="GO" id="GO:0009252">
    <property type="term" value="P:peptidoglycan biosynthetic process"/>
    <property type="evidence" value="ECO:0007669"/>
    <property type="project" value="UniProtKB-KW"/>
</dbReference>
<dbReference type="GO" id="GO:0009254">
    <property type="term" value="P:peptidoglycan turnover"/>
    <property type="evidence" value="ECO:0007669"/>
    <property type="project" value="UniProtKB-UniRule"/>
</dbReference>
<dbReference type="GO" id="GO:0008360">
    <property type="term" value="P:regulation of cell shape"/>
    <property type="evidence" value="ECO:0007669"/>
    <property type="project" value="UniProtKB-KW"/>
</dbReference>
<dbReference type="FunFam" id="3.20.20.300:FF:000001">
    <property type="entry name" value="Beta-hexosaminidase"/>
    <property type="match status" value="1"/>
</dbReference>
<dbReference type="Gene3D" id="3.20.20.300">
    <property type="entry name" value="Glycoside hydrolase, family 3, N-terminal domain"/>
    <property type="match status" value="1"/>
</dbReference>
<dbReference type="HAMAP" id="MF_00364">
    <property type="entry name" value="NagZ"/>
    <property type="match status" value="1"/>
</dbReference>
<dbReference type="InterPro" id="IPR022956">
    <property type="entry name" value="Beta_hexosaminidase_bac"/>
</dbReference>
<dbReference type="InterPro" id="IPR019800">
    <property type="entry name" value="Glyco_hydro_3_AS"/>
</dbReference>
<dbReference type="InterPro" id="IPR001764">
    <property type="entry name" value="Glyco_hydro_3_N"/>
</dbReference>
<dbReference type="InterPro" id="IPR036962">
    <property type="entry name" value="Glyco_hydro_3_N_sf"/>
</dbReference>
<dbReference type="InterPro" id="IPR017853">
    <property type="entry name" value="Glycoside_hydrolase_SF"/>
</dbReference>
<dbReference type="InterPro" id="IPR050226">
    <property type="entry name" value="NagZ_Beta-hexosaminidase"/>
</dbReference>
<dbReference type="NCBIfam" id="NF003740">
    <property type="entry name" value="PRK05337.1"/>
    <property type="match status" value="1"/>
</dbReference>
<dbReference type="PANTHER" id="PTHR30480:SF13">
    <property type="entry name" value="BETA-HEXOSAMINIDASE"/>
    <property type="match status" value="1"/>
</dbReference>
<dbReference type="PANTHER" id="PTHR30480">
    <property type="entry name" value="BETA-HEXOSAMINIDASE-RELATED"/>
    <property type="match status" value="1"/>
</dbReference>
<dbReference type="Pfam" id="PF00933">
    <property type="entry name" value="Glyco_hydro_3"/>
    <property type="match status" value="1"/>
</dbReference>
<dbReference type="SUPFAM" id="SSF51445">
    <property type="entry name" value="(Trans)glycosidases"/>
    <property type="match status" value="1"/>
</dbReference>
<dbReference type="PROSITE" id="PS00775">
    <property type="entry name" value="GLYCOSYL_HYDROL_F3"/>
    <property type="match status" value="1"/>
</dbReference>
<accession>B4TTH9</accession>
<keyword id="KW-0131">Cell cycle</keyword>
<keyword id="KW-0132">Cell division</keyword>
<keyword id="KW-0133">Cell shape</keyword>
<keyword id="KW-0961">Cell wall biogenesis/degradation</keyword>
<keyword id="KW-0963">Cytoplasm</keyword>
<keyword id="KW-0326">Glycosidase</keyword>
<keyword id="KW-0378">Hydrolase</keyword>
<keyword id="KW-0573">Peptidoglycan synthesis</keyword>
<feature type="chain" id="PRO_1000121073" description="Beta-hexosaminidase">
    <location>
        <begin position="1"/>
        <end position="341"/>
    </location>
</feature>
<feature type="region of interest" description="Disordered" evidence="2">
    <location>
        <begin position="170"/>
        <end position="189"/>
    </location>
</feature>
<feature type="compositionally biased region" description="Basic and acidic residues" evidence="2">
    <location>
        <begin position="174"/>
        <end position="189"/>
    </location>
</feature>
<feature type="active site" description="Proton donor/acceptor" evidence="1">
    <location>
        <position position="176"/>
    </location>
</feature>
<feature type="active site" description="Nucleophile" evidence="1">
    <location>
        <position position="248"/>
    </location>
</feature>
<feature type="binding site" evidence="1">
    <location>
        <position position="62"/>
    </location>
    <ligand>
        <name>substrate</name>
    </ligand>
</feature>
<feature type="binding site" evidence="1">
    <location>
        <position position="70"/>
    </location>
    <ligand>
        <name>substrate</name>
    </ligand>
</feature>
<feature type="binding site" evidence="1">
    <location>
        <position position="133"/>
    </location>
    <ligand>
        <name>substrate</name>
    </ligand>
</feature>
<feature type="binding site" evidence="1">
    <location>
        <begin position="163"/>
        <end position="164"/>
    </location>
    <ligand>
        <name>substrate</name>
    </ligand>
</feature>
<feature type="site" description="Important for catalytic activity" evidence="1">
    <location>
        <position position="174"/>
    </location>
</feature>